<keyword id="KW-0066">ATP synthesis</keyword>
<keyword id="KW-0997">Cell inner membrane</keyword>
<keyword id="KW-1003">Cell membrane</keyword>
<keyword id="KW-0138">CF(0)</keyword>
<keyword id="KW-0375">Hydrogen ion transport</keyword>
<keyword id="KW-0406">Ion transport</keyword>
<keyword id="KW-0472">Membrane</keyword>
<keyword id="KW-1185">Reference proteome</keyword>
<keyword id="KW-0812">Transmembrane</keyword>
<keyword id="KW-1133">Transmembrane helix</keyword>
<keyword id="KW-0813">Transport</keyword>
<sequence length="270" mass="30185">MAAPGEALTQSGYIEHHLTNLSLAKLGLVADEASFWNVHIDSLFFSVFTGMLFLWVFRSVAKKATTGVPGKLQCFVEMIVEFVADNVKETFHGRNPLIAPLALTIFCWVILMNLMDLVPIDFLPYPAEHWLGIPYLKVVPSADVNITMAMALGVFALMIYYSIKVKGLGGFAKELALHPFNHPIMIPFNLLLEVISLLAKPLSLGMRLFGNMFAGEVVFILIAAMLPWYLQWVGALPWAIFHILVILIQAFVFMMLTIVYLSMAHEDSDH</sequence>
<feature type="chain" id="PRO_0000362499" description="ATP synthase subunit a">
    <location>
        <begin position="1"/>
        <end position="270"/>
    </location>
</feature>
<feature type="transmembrane region" description="Helical" evidence="1">
    <location>
        <begin position="37"/>
        <end position="57"/>
    </location>
</feature>
<feature type="transmembrane region" description="Helical" evidence="1">
    <location>
        <begin position="98"/>
        <end position="118"/>
    </location>
</feature>
<feature type="transmembrane region" description="Helical" evidence="1">
    <location>
        <begin position="143"/>
        <end position="163"/>
    </location>
</feature>
<feature type="transmembrane region" description="Helical" evidence="1">
    <location>
        <begin position="217"/>
        <end position="237"/>
    </location>
</feature>
<feature type="transmembrane region" description="Helical" evidence="1">
    <location>
        <begin position="239"/>
        <end position="259"/>
    </location>
</feature>
<protein>
    <recommendedName>
        <fullName evidence="1">ATP synthase subunit a</fullName>
    </recommendedName>
    <alternativeName>
        <fullName evidence="1">ATP synthase F0 sector subunit a</fullName>
    </alternativeName>
    <alternativeName>
        <fullName evidence="1">F-ATPase subunit 6</fullName>
    </alternativeName>
</protein>
<organism>
    <name type="scientific">Aliivibrio fischeri (strain ATCC 700601 / ES114)</name>
    <name type="common">Vibrio fischeri</name>
    <dbReference type="NCBI Taxonomy" id="312309"/>
    <lineage>
        <taxon>Bacteria</taxon>
        <taxon>Pseudomonadati</taxon>
        <taxon>Pseudomonadota</taxon>
        <taxon>Gammaproteobacteria</taxon>
        <taxon>Vibrionales</taxon>
        <taxon>Vibrionaceae</taxon>
        <taxon>Aliivibrio</taxon>
    </lineage>
</organism>
<gene>
    <name evidence="1" type="primary">atpB</name>
    <name type="ordered locus">VF_2570</name>
</gene>
<reference key="1">
    <citation type="journal article" date="2005" name="Proc. Natl. Acad. Sci. U.S.A.">
        <title>Complete genome sequence of Vibrio fischeri: a symbiotic bacterium with pathogenic congeners.</title>
        <authorList>
            <person name="Ruby E.G."/>
            <person name="Urbanowski M."/>
            <person name="Campbell J."/>
            <person name="Dunn A."/>
            <person name="Faini M."/>
            <person name="Gunsalus R."/>
            <person name="Lostroh P."/>
            <person name="Lupp C."/>
            <person name="McCann J."/>
            <person name="Millikan D."/>
            <person name="Schaefer A."/>
            <person name="Stabb E."/>
            <person name="Stevens A."/>
            <person name="Visick K."/>
            <person name="Whistler C."/>
            <person name="Greenberg E.P."/>
        </authorList>
    </citation>
    <scope>NUCLEOTIDE SEQUENCE [LARGE SCALE GENOMIC DNA]</scope>
    <source>
        <strain>ATCC 700601 / ES114</strain>
    </source>
</reference>
<accession>Q5E1N1</accession>
<evidence type="ECO:0000255" key="1">
    <source>
        <dbReference type="HAMAP-Rule" id="MF_01393"/>
    </source>
</evidence>
<comment type="function">
    <text evidence="1">Key component of the proton channel; it plays a direct role in the translocation of protons across the membrane.</text>
</comment>
<comment type="subunit">
    <text evidence="1">F-type ATPases have 2 components, CF(1) - the catalytic core - and CF(0) - the membrane proton channel. CF(1) has five subunits: alpha(3), beta(3), gamma(1), delta(1), epsilon(1). CF(0) has three main subunits: a(1), b(2) and c(9-12). The alpha and beta chains form an alternating ring which encloses part of the gamma chain. CF(1) is attached to CF(0) by a central stalk formed by the gamma and epsilon chains, while a peripheral stalk is formed by the delta and b chains.</text>
</comment>
<comment type="subcellular location">
    <subcellularLocation>
        <location evidence="1">Cell inner membrane</location>
        <topology evidence="1">Multi-pass membrane protein</topology>
    </subcellularLocation>
</comment>
<comment type="similarity">
    <text evidence="1">Belongs to the ATPase A chain family.</text>
</comment>
<dbReference type="EMBL" id="CP000020">
    <property type="protein sequence ID" value="AAW87065.1"/>
    <property type="molecule type" value="Genomic_DNA"/>
</dbReference>
<dbReference type="RefSeq" id="WP_005421592.1">
    <property type="nucleotide sequence ID" value="NZ_CAWLES010000001.1"/>
</dbReference>
<dbReference type="RefSeq" id="YP_205953.1">
    <property type="nucleotide sequence ID" value="NC_006840.2"/>
</dbReference>
<dbReference type="SMR" id="Q5E1N1"/>
<dbReference type="STRING" id="312309.VF_2570"/>
<dbReference type="EnsemblBacteria" id="AAW87065">
    <property type="protein sequence ID" value="AAW87065"/>
    <property type="gene ID" value="VF_2570"/>
</dbReference>
<dbReference type="GeneID" id="54165320"/>
<dbReference type="KEGG" id="vfi:VF_2570"/>
<dbReference type="PATRIC" id="fig|312309.11.peg.2597"/>
<dbReference type="eggNOG" id="COG0356">
    <property type="taxonomic scope" value="Bacteria"/>
</dbReference>
<dbReference type="HOGENOM" id="CLU_041018_1_0_6"/>
<dbReference type="OrthoDB" id="9789241at2"/>
<dbReference type="Proteomes" id="UP000000537">
    <property type="component" value="Chromosome I"/>
</dbReference>
<dbReference type="GO" id="GO:0005886">
    <property type="term" value="C:plasma membrane"/>
    <property type="evidence" value="ECO:0007669"/>
    <property type="project" value="UniProtKB-SubCell"/>
</dbReference>
<dbReference type="GO" id="GO:0045259">
    <property type="term" value="C:proton-transporting ATP synthase complex"/>
    <property type="evidence" value="ECO:0007669"/>
    <property type="project" value="UniProtKB-KW"/>
</dbReference>
<dbReference type="GO" id="GO:0046933">
    <property type="term" value="F:proton-transporting ATP synthase activity, rotational mechanism"/>
    <property type="evidence" value="ECO:0007669"/>
    <property type="project" value="UniProtKB-UniRule"/>
</dbReference>
<dbReference type="GO" id="GO:0042777">
    <property type="term" value="P:proton motive force-driven plasma membrane ATP synthesis"/>
    <property type="evidence" value="ECO:0007669"/>
    <property type="project" value="TreeGrafter"/>
</dbReference>
<dbReference type="CDD" id="cd00310">
    <property type="entry name" value="ATP-synt_Fo_a_6"/>
    <property type="match status" value="1"/>
</dbReference>
<dbReference type="FunFam" id="1.20.120.220:FF:000002">
    <property type="entry name" value="ATP synthase subunit a"/>
    <property type="match status" value="1"/>
</dbReference>
<dbReference type="Gene3D" id="1.20.120.220">
    <property type="entry name" value="ATP synthase, F0 complex, subunit A"/>
    <property type="match status" value="1"/>
</dbReference>
<dbReference type="HAMAP" id="MF_01393">
    <property type="entry name" value="ATP_synth_a_bact"/>
    <property type="match status" value="1"/>
</dbReference>
<dbReference type="InterPro" id="IPR045082">
    <property type="entry name" value="ATP_syn_F0_a_bact/chloroplast"/>
</dbReference>
<dbReference type="InterPro" id="IPR000568">
    <property type="entry name" value="ATP_synth_F0_asu"/>
</dbReference>
<dbReference type="InterPro" id="IPR023011">
    <property type="entry name" value="ATP_synth_F0_asu_AS"/>
</dbReference>
<dbReference type="InterPro" id="IPR035908">
    <property type="entry name" value="F0_ATP_A_sf"/>
</dbReference>
<dbReference type="NCBIfam" id="TIGR01131">
    <property type="entry name" value="ATP_synt_6_or_A"/>
    <property type="match status" value="1"/>
</dbReference>
<dbReference type="NCBIfam" id="NF004477">
    <property type="entry name" value="PRK05815.1-1"/>
    <property type="match status" value="1"/>
</dbReference>
<dbReference type="PANTHER" id="PTHR42823">
    <property type="entry name" value="ATP SYNTHASE SUBUNIT A, CHLOROPLASTIC"/>
    <property type="match status" value="1"/>
</dbReference>
<dbReference type="PANTHER" id="PTHR42823:SF3">
    <property type="entry name" value="ATP SYNTHASE SUBUNIT A, CHLOROPLASTIC"/>
    <property type="match status" value="1"/>
</dbReference>
<dbReference type="Pfam" id="PF00119">
    <property type="entry name" value="ATP-synt_A"/>
    <property type="match status" value="1"/>
</dbReference>
<dbReference type="PRINTS" id="PR00123">
    <property type="entry name" value="ATPASEA"/>
</dbReference>
<dbReference type="SUPFAM" id="SSF81336">
    <property type="entry name" value="F1F0 ATP synthase subunit A"/>
    <property type="match status" value="1"/>
</dbReference>
<dbReference type="PROSITE" id="PS00449">
    <property type="entry name" value="ATPASE_A"/>
    <property type="match status" value="1"/>
</dbReference>
<proteinExistence type="inferred from homology"/>
<name>ATP6_ALIF1</name>